<gene>
    <name evidence="2" type="primary">groEL2</name>
    <name evidence="2" type="synonym">groL2</name>
    <name type="ordered locus">MUL_1393</name>
</gene>
<organism>
    <name type="scientific">Mycobacterium ulcerans (strain Agy99)</name>
    <dbReference type="NCBI Taxonomy" id="362242"/>
    <lineage>
        <taxon>Bacteria</taxon>
        <taxon>Bacillati</taxon>
        <taxon>Actinomycetota</taxon>
        <taxon>Actinomycetes</taxon>
        <taxon>Mycobacteriales</taxon>
        <taxon>Mycobacteriaceae</taxon>
        <taxon>Mycobacterium</taxon>
        <taxon>Mycobacterium ulcerans group</taxon>
    </lineage>
</organism>
<reference key="1">
    <citation type="journal article" date="2007" name="Genome Res.">
        <title>Reductive evolution and niche adaptation inferred from the genome of Mycobacterium ulcerans, the causative agent of Buruli ulcer.</title>
        <authorList>
            <person name="Stinear T.P."/>
            <person name="Seemann T."/>
            <person name="Pidot S."/>
            <person name="Frigui W."/>
            <person name="Reysset G."/>
            <person name="Garnier T."/>
            <person name="Meurice G."/>
            <person name="Simon D."/>
            <person name="Bouchier C."/>
            <person name="Ma L."/>
            <person name="Tichit M."/>
            <person name="Porter J.L."/>
            <person name="Ryan J."/>
            <person name="Johnson P.D.R."/>
            <person name="Davies J.K."/>
            <person name="Jenkin G.A."/>
            <person name="Small P.L.C."/>
            <person name="Jones L.M."/>
            <person name="Tekaia F."/>
            <person name="Laval F."/>
            <person name="Daffe M."/>
            <person name="Parkhill J."/>
            <person name="Cole S.T."/>
        </authorList>
    </citation>
    <scope>NUCLEOTIDE SEQUENCE [LARGE SCALE GENOMIC DNA]</scope>
    <source>
        <strain>Agy99</strain>
    </source>
</reference>
<dbReference type="EC" id="5.6.1.7" evidence="2"/>
<dbReference type="EMBL" id="CP000325">
    <property type="protein sequence ID" value="ABL03936.1"/>
    <property type="molecule type" value="Genomic_DNA"/>
</dbReference>
<dbReference type="RefSeq" id="WP_011739557.1">
    <property type="nucleotide sequence ID" value="NC_008611.1"/>
</dbReference>
<dbReference type="SMR" id="A0PNL7"/>
<dbReference type="KEGG" id="mul:MUL_1393"/>
<dbReference type="eggNOG" id="COG0459">
    <property type="taxonomic scope" value="Bacteria"/>
</dbReference>
<dbReference type="HOGENOM" id="CLU_016503_3_0_11"/>
<dbReference type="Proteomes" id="UP000000765">
    <property type="component" value="Chromosome"/>
</dbReference>
<dbReference type="GO" id="GO:0042603">
    <property type="term" value="C:capsule"/>
    <property type="evidence" value="ECO:0007669"/>
    <property type="project" value="UniProtKB-SubCell"/>
</dbReference>
<dbReference type="GO" id="GO:0009986">
    <property type="term" value="C:cell surface"/>
    <property type="evidence" value="ECO:0007669"/>
    <property type="project" value="UniProtKB-SubCell"/>
</dbReference>
<dbReference type="GO" id="GO:0005737">
    <property type="term" value="C:cytoplasm"/>
    <property type="evidence" value="ECO:0007669"/>
    <property type="project" value="UniProtKB-UniRule"/>
</dbReference>
<dbReference type="GO" id="GO:0005576">
    <property type="term" value="C:extracellular region"/>
    <property type="evidence" value="ECO:0007669"/>
    <property type="project" value="UniProtKB-KW"/>
</dbReference>
<dbReference type="GO" id="GO:0005524">
    <property type="term" value="F:ATP binding"/>
    <property type="evidence" value="ECO:0007669"/>
    <property type="project" value="UniProtKB-UniRule"/>
</dbReference>
<dbReference type="GO" id="GO:0140662">
    <property type="term" value="F:ATP-dependent protein folding chaperone"/>
    <property type="evidence" value="ECO:0007669"/>
    <property type="project" value="InterPro"/>
</dbReference>
<dbReference type="GO" id="GO:0016853">
    <property type="term" value="F:isomerase activity"/>
    <property type="evidence" value="ECO:0007669"/>
    <property type="project" value="UniProtKB-KW"/>
</dbReference>
<dbReference type="GO" id="GO:0051082">
    <property type="term" value="F:unfolded protein binding"/>
    <property type="evidence" value="ECO:0007669"/>
    <property type="project" value="UniProtKB-UniRule"/>
</dbReference>
<dbReference type="GO" id="GO:0042026">
    <property type="term" value="P:protein refolding"/>
    <property type="evidence" value="ECO:0007669"/>
    <property type="project" value="UniProtKB-UniRule"/>
</dbReference>
<dbReference type="CDD" id="cd03344">
    <property type="entry name" value="GroEL"/>
    <property type="match status" value="1"/>
</dbReference>
<dbReference type="FunFam" id="3.50.7.10:FF:000001">
    <property type="entry name" value="60 kDa chaperonin"/>
    <property type="match status" value="1"/>
</dbReference>
<dbReference type="Gene3D" id="3.50.7.10">
    <property type="entry name" value="GroEL"/>
    <property type="match status" value="1"/>
</dbReference>
<dbReference type="Gene3D" id="1.10.560.10">
    <property type="entry name" value="GroEL-like equatorial domain"/>
    <property type="match status" value="1"/>
</dbReference>
<dbReference type="Gene3D" id="3.30.260.10">
    <property type="entry name" value="TCP-1-like chaperonin intermediate domain"/>
    <property type="match status" value="1"/>
</dbReference>
<dbReference type="HAMAP" id="MF_00600">
    <property type="entry name" value="CH60"/>
    <property type="match status" value="1"/>
</dbReference>
<dbReference type="InterPro" id="IPR018370">
    <property type="entry name" value="Chaperonin_Cpn60_CS"/>
</dbReference>
<dbReference type="InterPro" id="IPR001844">
    <property type="entry name" value="Cpn60/GroEL"/>
</dbReference>
<dbReference type="InterPro" id="IPR002423">
    <property type="entry name" value="Cpn60/GroEL/TCP-1"/>
</dbReference>
<dbReference type="InterPro" id="IPR027409">
    <property type="entry name" value="GroEL-like_apical_dom_sf"/>
</dbReference>
<dbReference type="InterPro" id="IPR027413">
    <property type="entry name" value="GROEL-like_equatorial_sf"/>
</dbReference>
<dbReference type="InterPro" id="IPR027410">
    <property type="entry name" value="TCP-1-like_intermed_sf"/>
</dbReference>
<dbReference type="NCBIfam" id="TIGR02348">
    <property type="entry name" value="GroEL"/>
    <property type="match status" value="1"/>
</dbReference>
<dbReference type="NCBIfam" id="NF000592">
    <property type="entry name" value="PRK00013.1"/>
    <property type="match status" value="1"/>
</dbReference>
<dbReference type="NCBIfam" id="NF009487">
    <property type="entry name" value="PRK12849.1"/>
    <property type="match status" value="1"/>
</dbReference>
<dbReference type="NCBIfam" id="NF009488">
    <property type="entry name" value="PRK12850.1"/>
    <property type="match status" value="1"/>
</dbReference>
<dbReference type="NCBIfam" id="NF009489">
    <property type="entry name" value="PRK12851.1"/>
    <property type="match status" value="1"/>
</dbReference>
<dbReference type="PANTHER" id="PTHR45633">
    <property type="entry name" value="60 KDA HEAT SHOCK PROTEIN, MITOCHONDRIAL"/>
    <property type="match status" value="1"/>
</dbReference>
<dbReference type="Pfam" id="PF00118">
    <property type="entry name" value="Cpn60_TCP1"/>
    <property type="match status" value="1"/>
</dbReference>
<dbReference type="PRINTS" id="PR00298">
    <property type="entry name" value="CHAPERONIN60"/>
</dbReference>
<dbReference type="SUPFAM" id="SSF52029">
    <property type="entry name" value="GroEL apical domain-like"/>
    <property type="match status" value="1"/>
</dbReference>
<dbReference type="SUPFAM" id="SSF48592">
    <property type="entry name" value="GroEL equatorial domain-like"/>
    <property type="match status" value="1"/>
</dbReference>
<dbReference type="SUPFAM" id="SSF54849">
    <property type="entry name" value="GroEL-intermediate domain like"/>
    <property type="match status" value="1"/>
</dbReference>
<dbReference type="PROSITE" id="PS00296">
    <property type="entry name" value="CHAPERONINS_CPN60"/>
    <property type="match status" value="1"/>
</dbReference>
<feature type="chain" id="PRO_0000332029" description="Chaperonin GroEL 2">
    <location>
        <begin position="1"/>
        <end position="541"/>
    </location>
</feature>
<feature type="binding site" evidence="2">
    <location>
        <begin position="29"/>
        <end position="32"/>
    </location>
    <ligand>
        <name>ATP</name>
        <dbReference type="ChEBI" id="CHEBI:30616"/>
    </ligand>
</feature>
<feature type="binding site" evidence="2">
    <location>
        <begin position="86"/>
        <end position="90"/>
    </location>
    <ligand>
        <name>ATP</name>
        <dbReference type="ChEBI" id="CHEBI:30616"/>
    </ligand>
</feature>
<feature type="binding site" evidence="2">
    <location>
        <position position="413"/>
    </location>
    <ligand>
        <name>ATP</name>
        <dbReference type="ChEBI" id="CHEBI:30616"/>
    </ligand>
</feature>
<feature type="binding site" evidence="2">
    <location>
        <begin position="476"/>
        <end position="478"/>
    </location>
    <ligand>
        <name>ATP</name>
        <dbReference type="ChEBI" id="CHEBI:30616"/>
    </ligand>
</feature>
<feature type="binding site" evidence="2">
    <location>
        <position position="492"/>
    </location>
    <ligand>
        <name>ATP</name>
        <dbReference type="ChEBI" id="CHEBI:30616"/>
    </ligand>
</feature>
<protein>
    <recommendedName>
        <fullName evidence="2">Chaperonin GroEL 2</fullName>
        <ecNumber evidence="2">5.6.1.7</ecNumber>
    </recommendedName>
    <alternativeName>
        <fullName evidence="2">60 kDa chaperonin 2</fullName>
    </alternativeName>
    <alternativeName>
        <fullName evidence="2">Chaperonin-60 2</fullName>
        <shortName evidence="2">Cpn60 2</shortName>
    </alternativeName>
</protein>
<accession>A0PNL7</accession>
<keyword id="KW-0067">ATP-binding</keyword>
<keyword id="KW-0134">Cell wall</keyword>
<keyword id="KW-0143">Chaperone</keyword>
<keyword id="KW-0413">Isomerase</keyword>
<keyword id="KW-0547">Nucleotide-binding</keyword>
<keyword id="KW-0964">Secreted</keyword>
<proteinExistence type="inferred from homology"/>
<evidence type="ECO:0000250" key="1">
    <source>
        <dbReference type="UniProtKB" id="P9WPE7"/>
    </source>
</evidence>
<evidence type="ECO:0000255" key="2">
    <source>
        <dbReference type="HAMAP-Rule" id="MF_00600"/>
    </source>
</evidence>
<comment type="function">
    <text evidence="2">Together with its co-chaperonin GroES, plays an essential role in assisting protein folding. The GroEL-GroES system forms a nano-cage that allows encapsulation of the non-native substrate proteins and provides a physical environment optimized to promote and accelerate protein folding.</text>
</comment>
<comment type="catalytic activity">
    <reaction evidence="2">
        <text>ATP + H2O + a folded polypeptide = ADP + phosphate + an unfolded polypeptide.</text>
        <dbReference type="EC" id="5.6.1.7"/>
    </reaction>
</comment>
<comment type="subunit">
    <text evidence="2">Forms a cylinder of 14 subunits composed of two heptameric rings stacked back-to-back. Interacts with the co-chaperonin GroES.</text>
</comment>
<comment type="subcellular location">
    <subcellularLocation>
        <location evidence="1">Secreted</location>
        <location evidence="1">Capsule</location>
    </subcellularLocation>
    <subcellularLocation>
        <location evidence="1">Cell surface</location>
    </subcellularLocation>
    <subcellularLocation>
        <location evidence="1">Secreted</location>
        <location evidence="1">Cell wall</location>
    </subcellularLocation>
</comment>
<comment type="similarity">
    <text evidence="2">Belongs to the chaperonin (HSP60) family.</text>
</comment>
<name>CH602_MYCUA</name>
<sequence>MAKTIAYDEEARRGLERGLNALADAVKVTLGPKGRNVVLEKKWGAPTITNDGVSIAKEIELEDPYEKIGAELVKEVAKKTDDVAGDGTTTATVLAQALVKEGLRNVAAGANPLGLKRGIEKAVEKVTETLLKSAKEVETKEQIAATAAISAGDQSIGDLIAEAMDKVGNEGVITVEESNTFGLQLELTEGMRFDKGYISGYFVTDAERQEAVLEDPYILLVSSKVSTVKDLLPLLEKVIQGGKPLLIIAEDVEGEALSTLVVNKIRGTFKSVAVKAPGFGDRRKAMLQDMAILTGGQVISEEVGLSLETADISLLGKARKVVITKDETTLVEGAGDSDAIAGRVAQIRAEIENSDSDYDREKLQERLAKLAGGVAVIKAGAATEVELKERKHRIEDAVRNAKAAVEEGIVAGGGVALLHAVPSLDELKLSGDEATGANIVRVALEAPLKQIAFNGGLEPGVVAEKVRNSPVGTGLNAATGVYEDLLKAGVADPVKVTRSALQNAASIAGLFLTTEAVVADKPEKAAAPAGDPTGGMGGMDF</sequence>